<protein>
    <recommendedName>
        <fullName evidence="1">Ribosomal RNA small subunit methyltransferase G</fullName>
        <ecNumber evidence="1">2.1.1.170</ecNumber>
    </recommendedName>
    <alternativeName>
        <fullName evidence="1">16S rRNA 7-methylguanosine methyltransferase</fullName>
        <shortName evidence="1">16S rRNA m7G methyltransferase</shortName>
    </alternativeName>
</protein>
<organism>
    <name type="scientific">Yersinia pestis bv. Antiqua (strain Angola)</name>
    <dbReference type="NCBI Taxonomy" id="349746"/>
    <lineage>
        <taxon>Bacteria</taxon>
        <taxon>Pseudomonadati</taxon>
        <taxon>Pseudomonadota</taxon>
        <taxon>Gammaproteobacteria</taxon>
        <taxon>Enterobacterales</taxon>
        <taxon>Yersiniaceae</taxon>
        <taxon>Yersinia</taxon>
    </lineage>
</organism>
<name>RSMG_YERPG</name>
<proteinExistence type="inferred from homology"/>
<evidence type="ECO:0000255" key="1">
    <source>
        <dbReference type="HAMAP-Rule" id="MF_00074"/>
    </source>
</evidence>
<dbReference type="EC" id="2.1.1.170" evidence="1"/>
<dbReference type="EMBL" id="CP000901">
    <property type="protein sequence ID" value="ABX86280.1"/>
    <property type="molecule type" value="Genomic_DNA"/>
</dbReference>
<dbReference type="RefSeq" id="WP_002212261.1">
    <property type="nucleotide sequence ID" value="NZ_CP009935.1"/>
</dbReference>
<dbReference type="SMR" id="A9R5U7"/>
<dbReference type="GeneID" id="57974595"/>
<dbReference type="KEGG" id="ypg:YpAngola_A4210"/>
<dbReference type="PATRIC" id="fig|349746.12.peg.947"/>
<dbReference type="GO" id="GO:0005829">
    <property type="term" value="C:cytosol"/>
    <property type="evidence" value="ECO:0007669"/>
    <property type="project" value="TreeGrafter"/>
</dbReference>
<dbReference type="GO" id="GO:0070043">
    <property type="term" value="F:rRNA (guanine-N7-)-methyltransferase activity"/>
    <property type="evidence" value="ECO:0007669"/>
    <property type="project" value="UniProtKB-UniRule"/>
</dbReference>
<dbReference type="CDD" id="cd02440">
    <property type="entry name" value="AdoMet_MTases"/>
    <property type="match status" value="1"/>
</dbReference>
<dbReference type="FunFam" id="3.40.50.150:FF:000032">
    <property type="entry name" value="Ribosomal RNA small subunit methyltransferase G"/>
    <property type="match status" value="1"/>
</dbReference>
<dbReference type="Gene3D" id="3.40.50.150">
    <property type="entry name" value="Vaccinia Virus protein VP39"/>
    <property type="match status" value="1"/>
</dbReference>
<dbReference type="HAMAP" id="MF_00074">
    <property type="entry name" value="16SrRNA_methyltr_G"/>
    <property type="match status" value="1"/>
</dbReference>
<dbReference type="InterPro" id="IPR003682">
    <property type="entry name" value="rRNA_ssu_MeTfrase_G"/>
</dbReference>
<dbReference type="InterPro" id="IPR029063">
    <property type="entry name" value="SAM-dependent_MTases_sf"/>
</dbReference>
<dbReference type="NCBIfam" id="TIGR00138">
    <property type="entry name" value="rsmG_gidB"/>
    <property type="match status" value="1"/>
</dbReference>
<dbReference type="PANTHER" id="PTHR31760">
    <property type="entry name" value="S-ADENOSYL-L-METHIONINE-DEPENDENT METHYLTRANSFERASES SUPERFAMILY PROTEIN"/>
    <property type="match status" value="1"/>
</dbReference>
<dbReference type="PANTHER" id="PTHR31760:SF0">
    <property type="entry name" value="S-ADENOSYL-L-METHIONINE-DEPENDENT METHYLTRANSFERASES SUPERFAMILY PROTEIN"/>
    <property type="match status" value="1"/>
</dbReference>
<dbReference type="Pfam" id="PF02527">
    <property type="entry name" value="GidB"/>
    <property type="match status" value="1"/>
</dbReference>
<dbReference type="PIRSF" id="PIRSF003078">
    <property type="entry name" value="GidB"/>
    <property type="match status" value="1"/>
</dbReference>
<dbReference type="SUPFAM" id="SSF53335">
    <property type="entry name" value="S-adenosyl-L-methionine-dependent methyltransferases"/>
    <property type="match status" value="1"/>
</dbReference>
<comment type="function">
    <text evidence="1">Specifically methylates the N7 position of guanine in position 527 of 16S rRNA.</text>
</comment>
<comment type="catalytic activity">
    <reaction evidence="1">
        <text>guanosine(527) in 16S rRNA + S-adenosyl-L-methionine = N(7)-methylguanosine(527) in 16S rRNA + S-adenosyl-L-homocysteine</text>
        <dbReference type="Rhea" id="RHEA:42732"/>
        <dbReference type="Rhea" id="RHEA-COMP:10209"/>
        <dbReference type="Rhea" id="RHEA-COMP:10210"/>
        <dbReference type="ChEBI" id="CHEBI:57856"/>
        <dbReference type="ChEBI" id="CHEBI:59789"/>
        <dbReference type="ChEBI" id="CHEBI:74269"/>
        <dbReference type="ChEBI" id="CHEBI:74480"/>
        <dbReference type="EC" id="2.1.1.170"/>
    </reaction>
</comment>
<comment type="subcellular location">
    <subcellularLocation>
        <location evidence="1">Cytoplasm</location>
    </subcellularLocation>
</comment>
<comment type="similarity">
    <text evidence="1">Belongs to the methyltransferase superfamily. RNA methyltransferase RsmG family.</text>
</comment>
<gene>
    <name evidence="1" type="primary">rsmG</name>
    <name type="ordered locus">YpAngola_A4210</name>
</gene>
<accession>A9R5U7</accession>
<sequence length="206" mass="23097">MLKKLDSLLTVAGITLPDQQKHQLIGYVELLDKWNKAYNLTSVRDPQQMLVRHILDSIVVNPHLQGSRFIDVGTGPGLPGIPLAIVRPDAHFTLLDSLGKRVRFLRQVQHELGLNNIEPVQSRVEAFTSEPPFDGVISRAFASLQDMLSWCHHLPAKPEGRFYALKGVRPDDELAVLPEDIVLESVIKLDVPELDGERHLIILKSN</sequence>
<keyword id="KW-0963">Cytoplasm</keyword>
<keyword id="KW-0489">Methyltransferase</keyword>
<keyword id="KW-0698">rRNA processing</keyword>
<keyword id="KW-0949">S-adenosyl-L-methionine</keyword>
<keyword id="KW-0808">Transferase</keyword>
<reference key="1">
    <citation type="journal article" date="2010" name="J. Bacteriol.">
        <title>Genome sequence of the deep-rooted Yersinia pestis strain Angola reveals new insights into the evolution and pangenome of the plague bacterium.</title>
        <authorList>
            <person name="Eppinger M."/>
            <person name="Worsham P.L."/>
            <person name="Nikolich M.P."/>
            <person name="Riley D.R."/>
            <person name="Sebastian Y."/>
            <person name="Mou S."/>
            <person name="Achtman M."/>
            <person name="Lindler L.E."/>
            <person name="Ravel J."/>
        </authorList>
    </citation>
    <scope>NUCLEOTIDE SEQUENCE [LARGE SCALE GENOMIC DNA]</scope>
    <source>
        <strain>Angola</strain>
    </source>
</reference>
<feature type="chain" id="PRO_1000092663" description="Ribosomal RNA small subunit methyltransferase G">
    <location>
        <begin position="1"/>
        <end position="206"/>
    </location>
</feature>
<feature type="binding site" evidence="1">
    <location>
        <position position="73"/>
    </location>
    <ligand>
        <name>S-adenosyl-L-methionine</name>
        <dbReference type="ChEBI" id="CHEBI:59789"/>
    </ligand>
</feature>
<feature type="binding site" evidence="1">
    <location>
        <position position="78"/>
    </location>
    <ligand>
        <name>S-adenosyl-L-methionine</name>
        <dbReference type="ChEBI" id="CHEBI:59789"/>
    </ligand>
</feature>
<feature type="binding site" evidence="1">
    <location>
        <begin position="124"/>
        <end position="125"/>
    </location>
    <ligand>
        <name>S-adenosyl-L-methionine</name>
        <dbReference type="ChEBI" id="CHEBI:59789"/>
    </ligand>
</feature>
<feature type="binding site" evidence="1">
    <location>
        <position position="139"/>
    </location>
    <ligand>
        <name>S-adenosyl-L-methionine</name>
        <dbReference type="ChEBI" id="CHEBI:59789"/>
    </ligand>
</feature>